<protein>
    <recommendedName>
        <fullName evidence="1">Small ribosomal subunit protein uS3</fullName>
    </recommendedName>
    <alternativeName>
        <fullName evidence="2">30S ribosomal protein S3</fullName>
    </alternativeName>
</protein>
<comment type="function">
    <text evidence="1">Binds the lower part of the 30S subunit head. Binds mRNA in the 70S ribosome, positioning it for translation.</text>
</comment>
<comment type="subunit">
    <text evidence="1">Part of the 30S ribosomal subunit. Forms a tight complex with proteins S10 and S14.</text>
</comment>
<comment type="similarity">
    <text evidence="1">Belongs to the universal ribosomal protein uS3 family.</text>
</comment>
<organism>
    <name type="scientific">Francisella tularensis subsp. holarctica (strain LVS)</name>
    <dbReference type="NCBI Taxonomy" id="376619"/>
    <lineage>
        <taxon>Bacteria</taxon>
        <taxon>Pseudomonadati</taxon>
        <taxon>Pseudomonadota</taxon>
        <taxon>Gammaproteobacteria</taxon>
        <taxon>Thiotrichales</taxon>
        <taxon>Francisellaceae</taxon>
        <taxon>Francisella</taxon>
    </lineage>
</organism>
<name>RS3_FRATH</name>
<dbReference type="EMBL" id="AM233362">
    <property type="protein sequence ID" value="CAJ78683.1"/>
    <property type="molecule type" value="Genomic_DNA"/>
</dbReference>
<dbReference type="RefSeq" id="WP_003017796.1">
    <property type="nucleotide sequence ID" value="NZ_CP009694.1"/>
</dbReference>
<dbReference type="SMR" id="Q2A5G4"/>
<dbReference type="KEGG" id="ftl:FTL_0242"/>
<dbReference type="Proteomes" id="UP000001944">
    <property type="component" value="Chromosome"/>
</dbReference>
<dbReference type="GO" id="GO:0022627">
    <property type="term" value="C:cytosolic small ribosomal subunit"/>
    <property type="evidence" value="ECO:0007669"/>
    <property type="project" value="TreeGrafter"/>
</dbReference>
<dbReference type="GO" id="GO:0003729">
    <property type="term" value="F:mRNA binding"/>
    <property type="evidence" value="ECO:0007669"/>
    <property type="project" value="UniProtKB-UniRule"/>
</dbReference>
<dbReference type="GO" id="GO:0019843">
    <property type="term" value="F:rRNA binding"/>
    <property type="evidence" value="ECO:0007669"/>
    <property type="project" value="UniProtKB-UniRule"/>
</dbReference>
<dbReference type="GO" id="GO:0003735">
    <property type="term" value="F:structural constituent of ribosome"/>
    <property type="evidence" value="ECO:0007669"/>
    <property type="project" value="InterPro"/>
</dbReference>
<dbReference type="GO" id="GO:0006412">
    <property type="term" value="P:translation"/>
    <property type="evidence" value="ECO:0007669"/>
    <property type="project" value="UniProtKB-UniRule"/>
</dbReference>
<dbReference type="CDD" id="cd02412">
    <property type="entry name" value="KH-II_30S_S3"/>
    <property type="match status" value="1"/>
</dbReference>
<dbReference type="FunFam" id="3.30.1140.32:FF:000001">
    <property type="entry name" value="30S ribosomal protein S3"/>
    <property type="match status" value="1"/>
</dbReference>
<dbReference type="FunFam" id="3.30.300.20:FF:000001">
    <property type="entry name" value="30S ribosomal protein S3"/>
    <property type="match status" value="1"/>
</dbReference>
<dbReference type="Gene3D" id="3.30.300.20">
    <property type="match status" value="1"/>
</dbReference>
<dbReference type="Gene3D" id="3.30.1140.32">
    <property type="entry name" value="Ribosomal protein S3, C-terminal domain"/>
    <property type="match status" value="1"/>
</dbReference>
<dbReference type="HAMAP" id="MF_01309_B">
    <property type="entry name" value="Ribosomal_uS3_B"/>
    <property type="match status" value="1"/>
</dbReference>
<dbReference type="InterPro" id="IPR004087">
    <property type="entry name" value="KH_dom"/>
</dbReference>
<dbReference type="InterPro" id="IPR015946">
    <property type="entry name" value="KH_dom-like_a/b"/>
</dbReference>
<dbReference type="InterPro" id="IPR004044">
    <property type="entry name" value="KH_dom_type_2"/>
</dbReference>
<dbReference type="InterPro" id="IPR009019">
    <property type="entry name" value="KH_sf_prok-type"/>
</dbReference>
<dbReference type="InterPro" id="IPR036419">
    <property type="entry name" value="Ribosomal_S3_C_sf"/>
</dbReference>
<dbReference type="InterPro" id="IPR005704">
    <property type="entry name" value="Ribosomal_uS3_bac-typ"/>
</dbReference>
<dbReference type="InterPro" id="IPR001351">
    <property type="entry name" value="Ribosomal_uS3_C"/>
</dbReference>
<dbReference type="InterPro" id="IPR018280">
    <property type="entry name" value="Ribosomal_uS3_CS"/>
</dbReference>
<dbReference type="NCBIfam" id="TIGR01009">
    <property type="entry name" value="rpsC_bact"/>
    <property type="match status" value="1"/>
</dbReference>
<dbReference type="PANTHER" id="PTHR11760">
    <property type="entry name" value="30S/40S RIBOSOMAL PROTEIN S3"/>
    <property type="match status" value="1"/>
</dbReference>
<dbReference type="PANTHER" id="PTHR11760:SF19">
    <property type="entry name" value="SMALL RIBOSOMAL SUBUNIT PROTEIN US3C"/>
    <property type="match status" value="1"/>
</dbReference>
<dbReference type="Pfam" id="PF07650">
    <property type="entry name" value="KH_2"/>
    <property type="match status" value="1"/>
</dbReference>
<dbReference type="Pfam" id="PF00189">
    <property type="entry name" value="Ribosomal_S3_C"/>
    <property type="match status" value="1"/>
</dbReference>
<dbReference type="SMART" id="SM00322">
    <property type="entry name" value="KH"/>
    <property type="match status" value="1"/>
</dbReference>
<dbReference type="SUPFAM" id="SSF54814">
    <property type="entry name" value="Prokaryotic type KH domain (KH-domain type II)"/>
    <property type="match status" value="1"/>
</dbReference>
<dbReference type="SUPFAM" id="SSF54821">
    <property type="entry name" value="Ribosomal protein S3 C-terminal domain"/>
    <property type="match status" value="1"/>
</dbReference>
<dbReference type="PROSITE" id="PS50823">
    <property type="entry name" value="KH_TYPE_2"/>
    <property type="match status" value="1"/>
</dbReference>
<dbReference type="PROSITE" id="PS00548">
    <property type="entry name" value="RIBOSOMAL_S3"/>
    <property type="match status" value="1"/>
</dbReference>
<sequence>MGQKVNPNGIRLGYIRDWRSTWYADSSRYATKLNEDIKVREFLHKKLAAAAVSKIQIERPAQNAKITIHTARPGIVIGKKGEDVEKLRAEVHKLMGIPVQINIEEVRKPEIDAKLVAESVAQQLEKRVMFRRAMKKAMQAAMKSGAKGIKIMVSGRLGGAEIARSEWARDGRVPLQTFRADVDYATAEALTTYGVIGVKVWIYKGEILPGQIAEKKNNKKGAK</sequence>
<evidence type="ECO:0000255" key="1">
    <source>
        <dbReference type="HAMAP-Rule" id="MF_01309"/>
    </source>
</evidence>
<evidence type="ECO:0000305" key="2"/>
<accession>Q2A5G4</accession>
<keyword id="KW-1185">Reference proteome</keyword>
<keyword id="KW-0687">Ribonucleoprotein</keyword>
<keyword id="KW-0689">Ribosomal protein</keyword>
<keyword id="KW-0694">RNA-binding</keyword>
<keyword id="KW-0699">rRNA-binding</keyword>
<gene>
    <name evidence="1" type="primary">rpsC</name>
    <name type="ordered locus">FTL_0242</name>
</gene>
<reference key="1">
    <citation type="submission" date="2006-03" db="EMBL/GenBank/DDBJ databases">
        <title>Complete genome sequence of Francisella tularensis LVS (Live Vaccine Strain).</title>
        <authorList>
            <person name="Chain P."/>
            <person name="Larimer F."/>
            <person name="Land M."/>
            <person name="Stilwagen S."/>
            <person name="Larsson P."/>
            <person name="Bearden S."/>
            <person name="Chu M."/>
            <person name="Oyston P."/>
            <person name="Forsman M."/>
            <person name="Andersson S."/>
            <person name="Lindler L."/>
            <person name="Titball R."/>
            <person name="Garcia E."/>
        </authorList>
    </citation>
    <scope>NUCLEOTIDE SEQUENCE [LARGE SCALE GENOMIC DNA]</scope>
    <source>
        <strain>LVS</strain>
    </source>
</reference>
<proteinExistence type="inferred from homology"/>
<feature type="chain" id="PRO_0000293789" description="Small ribosomal subunit protein uS3">
    <location>
        <begin position="1"/>
        <end position="223"/>
    </location>
</feature>
<feature type="domain" description="KH type-2" evidence="1">
    <location>
        <begin position="39"/>
        <end position="107"/>
    </location>
</feature>